<reference key="1">
    <citation type="journal article" date="1999" name="Nature">
        <title>Sequence and analysis of chromosome 2 of the plant Arabidopsis thaliana.</title>
        <authorList>
            <person name="Lin X."/>
            <person name="Kaul S."/>
            <person name="Rounsley S.D."/>
            <person name="Shea T.P."/>
            <person name="Benito M.-I."/>
            <person name="Town C.D."/>
            <person name="Fujii C.Y."/>
            <person name="Mason T.M."/>
            <person name="Bowman C.L."/>
            <person name="Barnstead M.E."/>
            <person name="Feldblyum T.V."/>
            <person name="Buell C.R."/>
            <person name="Ketchum K.A."/>
            <person name="Lee J.J."/>
            <person name="Ronning C.M."/>
            <person name="Koo H.L."/>
            <person name="Moffat K.S."/>
            <person name="Cronin L.A."/>
            <person name="Shen M."/>
            <person name="Pai G."/>
            <person name="Van Aken S."/>
            <person name="Umayam L."/>
            <person name="Tallon L.J."/>
            <person name="Gill J.E."/>
            <person name="Adams M.D."/>
            <person name="Carrera A.J."/>
            <person name="Creasy T.H."/>
            <person name="Goodman H.M."/>
            <person name="Somerville C.R."/>
            <person name="Copenhaver G.P."/>
            <person name="Preuss D."/>
            <person name="Nierman W.C."/>
            <person name="White O."/>
            <person name="Eisen J.A."/>
            <person name="Salzberg S.L."/>
            <person name="Fraser C.M."/>
            <person name="Venter J.C."/>
        </authorList>
    </citation>
    <scope>NUCLEOTIDE SEQUENCE [LARGE SCALE GENOMIC DNA]</scope>
    <source>
        <strain>cv. Columbia</strain>
    </source>
</reference>
<reference key="2">
    <citation type="journal article" date="2017" name="Plant J.">
        <title>Araport11: a complete reannotation of the Arabidopsis thaliana reference genome.</title>
        <authorList>
            <person name="Cheng C.Y."/>
            <person name="Krishnakumar V."/>
            <person name="Chan A.P."/>
            <person name="Thibaud-Nissen F."/>
            <person name="Schobel S."/>
            <person name="Town C.D."/>
        </authorList>
    </citation>
    <scope>GENOME REANNOTATION</scope>
    <source>
        <strain>cv. Columbia</strain>
    </source>
</reference>
<reference key="3">
    <citation type="journal article" date="2003" name="Science">
        <title>Empirical analysis of transcriptional activity in the Arabidopsis genome.</title>
        <authorList>
            <person name="Yamada K."/>
            <person name="Lim J."/>
            <person name="Dale J.M."/>
            <person name="Chen H."/>
            <person name="Shinn P."/>
            <person name="Palm C.J."/>
            <person name="Southwick A.M."/>
            <person name="Wu H.C."/>
            <person name="Kim C.J."/>
            <person name="Nguyen M."/>
            <person name="Pham P.K."/>
            <person name="Cheuk R.F."/>
            <person name="Karlin-Newmann G."/>
            <person name="Liu S.X."/>
            <person name="Lam B."/>
            <person name="Sakano H."/>
            <person name="Wu T."/>
            <person name="Yu G."/>
            <person name="Miranda M."/>
            <person name="Quach H.L."/>
            <person name="Tripp M."/>
            <person name="Chang C.H."/>
            <person name="Lee J.M."/>
            <person name="Toriumi M.J."/>
            <person name="Chan M.M."/>
            <person name="Tang C.C."/>
            <person name="Onodera C.S."/>
            <person name="Deng J.M."/>
            <person name="Akiyama K."/>
            <person name="Ansari Y."/>
            <person name="Arakawa T."/>
            <person name="Banh J."/>
            <person name="Banno F."/>
            <person name="Bowser L."/>
            <person name="Brooks S.Y."/>
            <person name="Carninci P."/>
            <person name="Chao Q."/>
            <person name="Choy N."/>
            <person name="Enju A."/>
            <person name="Goldsmith A.D."/>
            <person name="Gurjal M."/>
            <person name="Hansen N.F."/>
            <person name="Hayashizaki Y."/>
            <person name="Johnson-Hopson C."/>
            <person name="Hsuan V.W."/>
            <person name="Iida K."/>
            <person name="Karnes M."/>
            <person name="Khan S."/>
            <person name="Koesema E."/>
            <person name="Ishida J."/>
            <person name="Jiang P.X."/>
            <person name="Jones T."/>
            <person name="Kawai J."/>
            <person name="Kamiya A."/>
            <person name="Meyers C."/>
            <person name="Nakajima M."/>
            <person name="Narusaka M."/>
            <person name="Seki M."/>
            <person name="Sakurai T."/>
            <person name="Satou M."/>
            <person name="Tamse R."/>
            <person name="Vaysberg M."/>
            <person name="Wallender E.K."/>
            <person name="Wong C."/>
            <person name="Yamamura Y."/>
            <person name="Yuan S."/>
            <person name="Shinozaki K."/>
            <person name="Davis R.W."/>
            <person name="Theologis A."/>
            <person name="Ecker J.R."/>
        </authorList>
    </citation>
    <scope>NUCLEOTIDE SEQUENCE [LARGE SCALE MRNA]</scope>
    <source>
        <strain>cv. Columbia</strain>
    </source>
</reference>
<reference key="4">
    <citation type="submission" date="2002-03" db="EMBL/GenBank/DDBJ databases">
        <title>Full-length cDNA from Arabidopsis thaliana.</title>
        <authorList>
            <person name="Brover V.V."/>
            <person name="Troukhan M.E."/>
            <person name="Alexandrov N.A."/>
            <person name="Lu Y.-P."/>
            <person name="Flavell R.B."/>
            <person name="Feldmann K.A."/>
        </authorList>
    </citation>
    <scope>NUCLEOTIDE SEQUENCE [LARGE SCALE MRNA]</scope>
</reference>
<reference key="5">
    <citation type="journal article" date="2011" name="Plant Physiol.">
        <title>Analysis of a range of catabolic mutants provides evidence that phytanoyl-coenzyme A does not act as a substrate of the electron-transfer flavoprotein/electron-transfer flavoprotein:ubiquinone oxidoreductase complex in Arabidopsis during dark-induced senescence.</title>
        <authorList>
            <person name="Araujo W.L."/>
            <person name="Ishizaki K."/>
            <person name="Nunes-Nesi A."/>
            <person name="Tohge T."/>
            <person name="Larson T.R."/>
            <person name="Krahnert I."/>
            <person name="Balbo I."/>
            <person name="Witt S."/>
            <person name="Dormann P."/>
            <person name="Graham I.A."/>
            <person name="Leaver C.J."/>
            <person name="Fernie A.R."/>
        </authorList>
    </citation>
    <scope>FUNCTION</scope>
    <scope>CATALYTIC ACTIVITY</scope>
    <scope>DISRUPTION PHENOTYPE</scope>
</reference>
<name>PAHX_ARATH</name>
<keyword id="KW-0223">Dioxygenase</keyword>
<keyword id="KW-0408">Iron</keyword>
<keyword id="KW-0479">Metal-binding</keyword>
<keyword id="KW-0560">Oxidoreductase</keyword>
<keyword id="KW-1185">Reference proteome</keyword>
<keyword id="KW-0847">Vitamin C</keyword>
<accession>Q9ZVF6</accession>
<accession>Q8LA19</accession>
<accession>Q93Z95</accession>
<feature type="chain" id="PRO_0000424904" description="Phytanoyl-CoA dioxygenase">
    <location>
        <begin position="1"/>
        <end position="283"/>
    </location>
</feature>
<feature type="binding site" evidence="1">
    <location>
        <position position="99"/>
    </location>
    <ligand>
        <name>2-oxoglutarate</name>
        <dbReference type="ChEBI" id="CHEBI:16810"/>
    </ligand>
</feature>
<feature type="binding site" evidence="1">
    <location>
        <position position="138"/>
    </location>
    <ligand>
        <name>2-oxoglutarate</name>
        <dbReference type="ChEBI" id="CHEBI:16810"/>
    </ligand>
</feature>
<feature type="binding site" evidence="1">
    <location>
        <begin position="153"/>
        <end position="155"/>
    </location>
    <ligand>
        <name>2-oxoglutarate</name>
        <dbReference type="ChEBI" id="CHEBI:16810"/>
    </ligand>
</feature>
<feature type="binding site" evidence="1">
    <location>
        <position position="153"/>
    </location>
    <ligand>
        <name>Fe cation</name>
        <dbReference type="ChEBI" id="CHEBI:24875"/>
    </ligand>
</feature>
<feature type="binding site" evidence="1">
    <location>
        <position position="155"/>
    </location>
    <ligand>
        <name>Fe cation</name>
        <dbReference type="ChEBI" id="CHEBI:24875"/>
    </ligand>
</feature>
<feature type="binding site" evidence="1">
    <location>
        <position position="170"/>
    </location>
    <ligand>
        <name>2-oxoglutarate</name>
        <dbReference type="ChEBI" id="CHEBI:16810"/>
    </ligand>
</feature>
<feature type="binding site" evidence="1">
    <location>
        <position position="238"/>
    </location>
    <ligand>
        <name>Fe cation</name>
        <dbReference type="ChEBI" id="CHEBI:24875"/>
    </ligand>
</feature>
<feature type="binding site" evidence="1">
    <location>
        <position position="240"/>
    </location>
    <ligand>
        <name>2-oxoglutarate</name>
        <dbReference type="ChEBI" id="CHEBI:16810"/>
    </ligand>
</feature>
<feature type="binding site" evidence="1">
    <location>
        <position position="249"/>
    </location>
    <ligand>
        <name>2-oxoglutarate</name>
        <dbReference type="ChEBI" id="CHEBI:16810"/>
    </ligand>
</feature>
<feature type="sequence conflict" description="In Ref. 4; AAM65626." evidence="4" ref="4">
    <original>R</original>
    <variation>K</variation>
    <location>
        <position position="130"/>
    </location>
</feature>
<evidence type="ECO:0000250" key="1">
    <source>
        <dbReference type="UniProtKB" id="O14832"/>
    </source>
</evidence>
<evidence type="ECO:0000269" key="2">
    <source>
    </source>
</evidence>
<evidence type="ECO:0000303" key="3">
    <source>
    </source>
</evidence>
<evidence type="ECO:0000305" key="4"/>
<evidence type="ECO:0000305" key="5">
    <source>
    </source>
</evidence>
<evidence type="ECO:0000312" key="6">
    <source>
        <dbReference type="Araport" id="AT2G01490"/>
    </source>
</evidence>
<evidence type="ECO:0000312" key="7">
    <source>
        <dbReference type="EMBL" id="AAC67325.2"/>
    </source>
</evidence>
<protein>
    <recommendedName>
        <fullName evidence="5">Phytanoyl-CoA dioxygenase</fullName>
        <ecNumber evidence="2">1.14.11.18</ecNumber>
    </recommendedName>
    <alternativeName>
        <fullName evidence="3">Phytanoyl-CoA 2-hydroxylase</fullName>
    </alternativeName>
</protein>
<dbReference type="EC" id="1.14.11.18" evidence="2"/>
<dbReference type="EMBL" id="AC005560">
    <property type="protein sequence ID" value="AAC67325.2"/>
    <property type="molecule type" value="Genomic_DNA"/>
</dbReference>
<dbReference type="EMBL" id="CP002685">
    <property type="protein sequence ID" value="AEC05460.1"/>
    <property type="molecule type" value="Genomic_DNA"/>
</dbReference>
<dbReference type="EMBL" id="CP002685">
    <property type="protein sequence ID" value="ANM62973.1"/>
    <property type="molecule type" value="Genomic_DNA"/>
</dbReference>
<dbReference type="EMBL" id="AY057710">
    <property type="protein sequence ID" value="AAL15340.1"/>
    <property type="molecule type" value="mRNA"/>
</dbReference>
<dbReference type="EMBL" id="AY116965">
    <property type="protein sequence ID" value="AAM51599.1"/>
    <property type="molecule type" value="mRNA"/>
</dbReference>
<dbReference type="EMBL" id="AY088080">
    <property type="protein sequence ID" value="AAM65626.1"/>
    <property type="molecule type" value="mRNA"/>
</dbReference>
<dbReference type="PIR" id="D84425">
    <property type="entry name" value="D84425"/>
</dbReference>
<dbReference type="RefSeq" id="NP_001325094.1">
    <property type="nucleotide sequence ID" value="NM_001335065.1"/>
</dbReference>
<dbReference type="RefSeq" id="NP_565262.1">
    <property type="nucleotide sequence ID" value="NM_126210.4"/>
</dbReference>
<dbReference type="SMR" id="Q9ZVF6"/>
<dbReference type="BioGRID" id="80">
    <property type="interactions" value="1"/>
</dbReference>
<dbReference type="FunCoup" id="Q9ZVF6">
    <property type="interactions" value="2518"/>
</dbReference>
<dbReference type="STRING" id="3702.Q9ZVF6"/>
<dbReference type="iPTMnet" id="Q9ZVF6"/>
<dbReference type="PaxDb" id="3702-AT2G01490.1"/>
<dbReference type="ProteomicsDB" id="226049"/>
<dbReference type="EnsemblPlants" id="AT2G01490.1">
    <property type="protein sequence ID" value="AT2G01490.1"/>
    <property type="gene ID" value="AT2G01490"/>
</dbReference>
<dbReference type="EnsemblPlants" id="AT2G01490.2">
    <property type="protein sequence ID" value="AT2G01490.2"/>
    <property type="gene ID" value="AT2G01490"/>
</dbReference>
<dbReference type="GeneID" id="814677"/>
<dbReference type="Gramene" id="AT2G01490.1">
    <property type="protein sequence ID" value="AT2G01490.1"/>
    <property type="gene ID" value="AT2G01490"/>
</dbReference>
<dbReference type="Gramene" id="AT2G01490.2">
    <property type="protein sequence ID" value="AT2G01490.2"/>
    <property type="gene ID" value="AT2G01490"/>
</dbReference>
<dbReference type="KEGG" id="ath:AT2G01490"/>
<dbReference type="Araport" id="AT2G01490"/>
<dbReference type="TAIR" id="AT2G01490">
    <property type="gene designation" value="PAHX"/>
</dbReference>
<dbReference type="eggNOG" id="KOG3290">
    <property type="taxonomic scope" value="Eukaryota"/>
</dbReference>
<dbReference type="HOGENOM" id="CLU_048953_0_0_1"/>
<dbReference type="InParanoid" id="Q9ZVF6"/>
<dbReference type="OMA" id="KYSEDNW"/>
<dbReference type="PhylomeDB" id="Q9ZVF6"/>
<dbReference type="UniPathway" id="UPA00199"/>
<dbReference type="PRO" id="PR:Q9ZVF6"/>
<dbReference type="Proteomes" id="UP000006548">
    <property type="component" value="Chromosome 2"/>
</dbReference>
<dbReference type="ExpressionAtlas" id="Q9ZVF6">
    <property type="expression patterns" value="baseline and differential"/>
</dbReference>
<dbReference type="GO" id="GO:0031418">
    <property type="term" value="F:L-ascorbic acid binding"/>
    <property type="evidence" value="ECO:0007669"/>
    <property type="project" value="UniProtKB-KW"/>
</dbReference>
<dbReference type="GO" id="GO:0046872">
    <property type="term" value="F:metal ion binding"/>
    <property type="evidence" value="ECO:0007669"/>
    <property type="project" value="UniProtKB-KW"/>
</dbReference>
<dbReference type="GO" id="GO:0048244">
    <property type="term" value="F:phytanoyl-CoA dioxygenase activity"/>
    <property type="evidence" value="ECO:0000315"/>
    <property type="project" value="TAIR"/>
</dbReference>
<dbReference type="GO" id="GO:0006631">
    <property type="term" value="P:fatty acid metabolic process"/>
    <property type="evidence" value="ECO:0007669"/>
    <property type="project" value="UniProtKB-UniPathway"/>
</dbReference>
<dbReference type="Gene3D" id="2.60.120.620">
    <property type="entry name" value="q2cbj1_9rhob like domain"/>
    <property type="match status" value="1"/>
</dbReference>
<dbReference type="InterPro" id="IPR008775">
    <property type="entry name" value="Phytyl_CoA_dOase-like"/>
</dbReference>
<dbReference type="PANTHER" id="PTHR20883">
    <property type="entry name" value="PHYTANOYL-COA DIOXYGENASE DOMAIN CONTAINING 1"/>
    <property type="match status" value="1"/>
</dbReference>
<dbReference type="PANTHER" id="PTHR20883:SF15">
    <property type="entry name" value="PHYTANOYL-COA DIOXYGENASE DOMAIN-CONTAINING PROTEIN 1"/>
    <property type="match status" value="1"/>
</dbReference>
<dbReference type="Pfam" id="PF05721">
    <property type="entry name" value="PhyH"/>
    <property type="match status" value="1"/>
</dbReference>
<dbReference type="SUPFAM" id="SSF51197">
    <property type="entry name" value="Clavaminate synthase-like"/>
    <property type="match status" value="1"/>
</dbReference>
<proteinExistence type="evidence at protein level"/>
<gene>
    <name evidence="3" type="primary">PAHX</name>
    <name evidence="6" type="ordered locus">At2g01490</name>
    <name evidence="7" type="ORF">F2I9.11</name>
</gene>
<sequence length="283" mass="32028">MGITGSLTPDQLDFFHSQGYLVIESFASEDEIRGLRKRMDELLNQFDCSVSSIFSTKNQKHTTDNYFFESAEKISFFFEEKAFGDDGKLKQPKQLSINKVGHALHELDPLYKDFTYSSKFSSLASSLGYRRPVVMQSMYIFKQPGIGGEVVPHQDNSFVYTDPQSCTGLWIALEDSTLVNGCLWAIPGSHKNGLVRRFIRGDNGITFDQPSPSYEQKDFVSIEMKAGSLIAIHGDLIHQSFENLSSKSRHAYSLHVVESDGCKWAKDNWIQRAKMPEPLYVLP</sequence>
<comment type="function">
    <text evidence="2">Converts phytanoyl-CoA to 2-hydroxyphytanoyl-CoA.</text>
</comment>
<comment type="catalytic activity">
    <reaction evidence="2">
        <text>phytanoyl-CoA + 2-oxoglutarate + O2 = 2-hydroxyphytanoyl-CoA + succinate + CO2</text>
        <dbReference type="Rhea" id="RHEA:16065"/>
        <dbReference type="ChEBI" id="CHEBI:15379"/>
        <dbReference type="ChEBI" id="CHEBI:16526"/>
        <dbReference type="ChEBI" id="CHEBI:16810"/>
        <dbReference type="ChEBI" id="CHEBI:30031"/>
        <dbReference type="ChEBI" id="CHEBI:57334"/>
        <dbReference type="ChEBI" id="CHEBI:57391"/>
        <dbReference type="EC" id="1.14.11.18"/>
    </reaction>
    <physiologicalReaction direction="left-to-right" evidence="2">
        <dbReference type="Rhea" id="RHEA:16066"/>
    </physiologicalReaction>
</comment>
<comment type="cofactor">
    <cofactor evidence="1">
        <name>Fe cation</name>
        <dbReference type="ChEBI" id="CHEBI:24875"/>
    </cofactor>
</comment>
<comment type="cofactor">
    <cofactor evidence="1">
        <name>L-ascorbate</name>
        <dbReference type="ChEBI" id="CHEBI:38290"/>
    </cofactor>
</comment>
<comment type="pathway">
    <text>Lipid metabolism; fatty acid metabolism.</text>
</comment>
<comment type="disruption phenotype">
    <text evidence="2">No visible phenotypes under normal growth conditions.</text>
</comment>
<comment type="similarity">
    <text evidence="4">Belongs to the PhyH family.</text>
</comment>
<organism>
    <name type="scientific">Arabidopsis thaliana</name>
    <name type="common">Mouse-ear cress</name>
    <dbReference type="NCBI Taxonomy" id="3702"/>
    <lineage>
        <taxon>Eukaryota</taxon>
        <taxon>Viridiplantae</taxon>
        <taxon>Streptophyta</taxon>
        <taxon>Embryophyta</taxon>
        <taxon>Tracheophyta</taxon>
        <taxon>Spermatophyta</taxon>
        <taxon>Magnoliopsida</taxon>
        <taxon>eudicotyledons</taxon>
        <taxon>Gunneridae</taxon>
        <taxon>Pentapetalae</taxon>
        <taxon>rosids</taxon>
        <taxon>malvids</taxon>
        <taxon>Brassicales</taxon>
        <taxon>Brassicaceae</taxon>
        <taxon>Camelineae</taxon>
        <taxon>Arabidopsis</taxon>
    </lineage>
</organism>